<keyword id="KW-0072">Autophagy</keyword>
<keyword id="KW-0963">Cytoplasm</keyword>
<keyword id="KW-0378">Hydrolase</keyword>
<keyword id="KW-0645">Protease</keyword>
<keyword id="KW-0653">Protein transport</keyword>
<keyword id="KW-1185">Reference proteome</keyword>
<keyword id="KW-0788">Thiol protease</keyword>
<keyword id="KW-0813">Transport</keyword>
<keyword id="KW-0833">Ubl conjugation pathway</keyword>
<protein>
    <recommendedName>
        <fullName evidence="6">Cysteine protease ATG4B</fullName>
        <ecNumber evidence="2">3.4.22.-</ecNumber>
    </recommendedName>
    <alternativeName>
        <fullName>Autophagy-related protein 4 homolog B</fullName>
        <shortName evidence="5">OsAtg4</shortName>
        <shortName evidence="5">Protein autophagy 4</shortName>
    </alternativeName>
</protein>
<name>ATG4B_ORYSI</name>
<evidence type="ECO:0000250" key="1">
    <source>
        <dbReference type="UniProtKB" id="Q8BGE6"/>
    </source>
</evidence>
<evidence type="ECO:0000250" key="2">
    <source>
        <dbReference type="UniProtKB" id="Q9Y4P1"/>
    </source>
</evidence>
<evidence type="ECO:0000256" key="3">
    <source>
        <dbReference type="SAM" id="MobiDB-lite"/>
    </source>
</evidence>
<evidence type="ECO:0000269" key="4">
    <source>
    </source>
</evidence>
<evidence type="ECO:0000303" key="5">
    <source>
    </source>
</evidence>
<evidence type="ECO:0000305" key="6"/>
<dbReference type="EC" id="3.4.22.-" evidence="2"/>
<dbReference type="EMBL" id="DQ269984">
    <property type="protein sequence ID" value="ABB77259.1"/>
    <property type="molecule type" value="mRNA"/>
</dbReference>
<dbReference type="EMBL" id="CM000129">
    <property type="status" value="NOT_ANNOTATED_CDS"/>
    <property type="molecule type" value="Genomic_DNA"/>
</dbReference>
<dbReference type="SMR" id="Q2XPP4"/>
<dbReference type="STRING" id="39946.Q2XPP4"/>
<dbReference type="OrthoDB" id="691379at2759"/>
<dbReference type="Proteomes" id="UP000007015">
    <property type="component" value="Chromosome 4"/>
</dbReference>
<dbReference type="GO" id="GO:0005737">
    <property type="term" value="C:cytoplasm"/>
    <property type="evidence" value="ECO:0007669"/>
    <property type="project" value="UniProtKB-SubCell"/>
</dbReference>
<dbReference type="GO" id="GO:0004197">
    <property type="term" value="F:cysteine-type endopeptidase activity"/>
    <property type="evidence" value="ECO:0007669"/>
    <property type="project" value="TreeGrafter"/>
</dbReference>
<dbReference type="GO" id="GO:0019786">
    <property type="term" value="F:protein-phosphatidylethanolamide deconjugating activity"/>
    <property type="evidence" value="ECO:0007669"/>
    <property type="project" value="InterPro"/>
</dbReference>
<dbReference type="GO" id="GO:0035973">
    <property type="term" value="P:aggrephagy"/>
    <property type="evidence" value="ECO:0007669"/>
    <property type="project" value="TreeGrafter"/>
</dbReference>
<dbReference type="GO" id="GO:0000045">
    <property type="term" value="P:autophagosome assembly"/>
    <property type="evidence" value="ECO:0007669"/>
    <property type="project" value="TreeGrafter"/>
</dbReference>
<dbReference type="GO" id="GO:0000423">
    <property type="term" value="P:mitophagy"/>
    <property type="evidence" value="ECO:0007669"/>
    <property type="project" value="TreeGrafter"/>
</dbReference>
<dbReference type="GO" id="GO:0034727">
    <property type="term" value="P:piecemeal microautophagy of the nucleus"/>
    <property type="evidence" value="ECO:0007669"/>
    <property type="project" value="TreeGrafter"/>
</dbReference>
<dbReference type="GO" id="GO:0016485">
    <property type="term" value="P:protein processing"/>
    <property type="evidence" value="ECO:0007669"/>
    <property type="project" value="TreeGrafter"/>
</dbReference>
<dbReference type="GO" id="GO:0015031">
    <property type="term" value="P:protein transport"/>
    <property type="evidence" value="ECO:0007669"/>
    <property type="project" value="UniProtKB-KW"/>
</dbReference>
<dbReference type="InterPro" id="IPR038765">
    <property type="entry name" value="Papain-like_cys_pep_sf"/>
</dbReference>
<dbReference type="InterPro" id="IPR005078">
    <property type="entry name" value="Peptidase_C54"/>
</dbReference>
<dbReference type="InterPro" id="IPR046792">
    <property type="entry name" value="Peptidase_C54_cat"/>
</dbReference>
<dbReference type="PANTHER" id="PTHR22624:SF49">
    <property type="entry name" value="CYSTEINE PROTEASE"/>
    <property type="match status" value="1"/>
</dbReference>
<dbReference type="PANTHER" id="PTHR22624">
    <property type="entry name" value="CYSTEINE PROTEASE ATG4"/>
    <property type="match status" value="1"/>
</dbReference>
<dbReference type="Pfam" id="PF03416">
    <property type="entry name" value="Peptidase_C54"/>
    <property type="match status" value="1"/>
</dbReference>
<dbReference type="SUPFAM" id="SSF54001">
    <property type="entry name" value="Cysteine proteinases"/>
    <property type="match status" value="1"/>
</dbReference>
<proteinExistence type="evidence at protein level"/>
<gene>
    <name type="primary">ATG4B</name>
    <name type="synonym">APG4</name>
    <name type="synonym">APG4B</name>
    <name type="ORF">OsI_017321</name>
</gene>
<sequence length="478" mass="52526">MTSLPDRGVSSSSSDPLCEGNIAPCSSSSEQKEDCSLKQSKTSILSCVFNSPFNIFEAHQDSSANKSPKSSSGSYDWLRVLRRIVCSGSMWRFLGTSKVLTSSDVWFLGKCYKLSSEESSSDSDSESGHATFLEDFSSRIWITYRRGFDAISDSKYTSDVNWGCMVRSSQMLVAQALIFHHLGRSWRRPSEKPYNPEYIGILHMFGDSEACAFSIHNLLQAGNSYGLAAGSWVGPYAMCRAWQTLVRTNREQHEVVDGNESFPMALYVVSGDEDGERGGAPVVCIDVAAQLCCDFNKGQSTWSPILLLVPLVLGLDKINPRYIPLLKETFTFPQSLGILGGKPGTSTYIAGVQDDRALYLDPHEVQMAVDIAADNIEADTSSYHCSTVRDLALDLIDPSLAIGFYCRDKDDFDDFCSRATELVDKANGAPLFTVVQSVQPSKQMYNQDDVLGISGDGNINVEDLDASGETGEEEWQIL</sequence>
<accession>Q2XPP4</accession>
<accession>A2XZ28</accession>
<comment type="function">
    <text evidence="2 4">Cysteine protease that plays a key role in autophagy by mediating both proteolytic activation and delipidation of ATG8 family proteins (PubMed:17082902). The protease activity is required for proteolytic activation of ATG8 family proteins: cleaves the C-terminal amino acid of ATG8 proteins to reveal a C-terminal glycine (PubMed:17082902). Exposure of the glycine at the C-terminus is essential for ATG8 proteins conjugation to phosphatidylethanolamine (PE) and insertion to membranes, which is necessary for autophagy (By similarity). In addition to the protease activity, also mediates delipidation of PE-conjugated ATG8 proteins (By similarity).</text>
</comment>
<comment type="catalytic activity">
    <reaction evidence="2">
        <text>[protein]-C-terminal L-amino acid-glycyl-phosphatidylethanolamide + H2O = [protein]-C-terminal L-amino acid-glycine + a 1,2-diacyl-sn-glycero-3-phosphoethanolamine</text>
        <dbReference type="Rhea" id="RHEA:67548"/>
        <dbReference type="Rhea" id="RHEA-COMP:17323"/>
        <dbReference type="Rhea" id="RHEA-COMP:17324"/>
        <dbReference type="ChEBI" id="CHEBI:15377"/>
        <dbReference type="ChEBI" id="CHEBI:64612"/>
        <dbReference type="ChEBI" id="CHEBI:172940"/>
        <dbReference type="ChEBI" id="CHEBI:172941"/>
    </reaction>
    <physiologicalReaction direction="left-to-right" evidence="2">
        <dbReference type="Rhea" id="RHEA:67549"/>
    </physiologicalReaction>
</comment>
<comment type="subunit">
    <text evidence="4">Interacts with ATG8.</text>
</comment>
<comment type="subcellular location">
    <subcellularLocation>
        <location evidence="1">Cytoplasm</location>
    </subcellularLocation>
</comment>
<comment type="tissue specificity">
    <text evidence="4">Constitutively expressed.</text>
</comment>
<comment type="similarity">
    <text evidence="6">Belongs to the peptidase C54 family.</text>
</comment>
<organism>
    <name type="scientific">Oryza sativa subsp. indica</name>
    <name type="common">Rice</name>
    <dbReference type="NCBI Taxonomy" id="39946"/>
    <lineage>
        <taxon>Eukaryota</taxon>
        <taxon>Viridiplantae</taxon>
        <taxon>Streptophyta</taxon>
        <taxon>Embryophyta</taxon>
        <taxon>Tracheophyta</taxon>
        <taxon>Spermatophyta</taxon>
        <taxon>Magnoliopsida</taxon>
        <taxon>Liliopsida</taxon>
        <taxon>Poales</taxon>
        <taxon>Poaceae</taxon>
        <taxon>BOP clade</taxon>
        <taxon>Oryzoideae</taxon>
        <taxon>Oryzeae</taxon>
        <taxon>Oryzinae</taxon>
        <taxon>Oryza</taxon>
        <taxon>Oryza sativa</taxon>
    </lineage>
</organism>
<reference key="1">
    <citation type="journal article" date="2006" name="Mol. Biol. Rep.">
        <title>Identification and characterization of two rice autophagy associated genes, OsAtg8 and OsAtg4.</title>
        <authorList>
            <person name="Su W."/>
            <person name="Ma H."/>
            <person name="Liu C."/>
            <person name="Wu J."/>
            <person name="Yang J."/>
        </authorList>
    </citation>
    <scope>NUCLEOTIDE SEQUENCE [MRNA]</scope>
    <scope>FUNCTION</scope>
    <scope>TISSUE SPECIFICITY</scope>
    <scope>INTERACTION WITH ATG8</scope>
</reference>
<reference key="2">
    <citation type="journal article" date="2005" name="PLoS Biol.">
        <title>The genomes of Oryza sativa: a history of duplications.</title>
        <authorList>
            <person name="Yu J."/>
            <person name="Wang J."/>
            <person name="Lin W."/>
            <person name="Li S."/>
            <person name="Li H."/>
            <person name="Zhou J."/>
            <person name="Ni P."/>
            <person name="Dong W."/>
            <person name="Hu S."/>
            <person name="Zeng C."/>
            <person name="Zhang J."/>
            <person name="Zhang Y."/>
            <person name="Li R."/>
            <person name="Xu Z."/>
            <person name="Li S."/>
            <person name="Li X."/>
            <person name="Zheng H."/>
            <person name="Cong L."/>
            <person name="Lin L."/>
            <person name="Yin J."/>
            <person name="Geng J."/>
            <person name="Li G."/>
            <person name="Shi J."/>
            <person name="Liu J."/>
            <person name="Lv H."/>
            <person name="Li J."/>
            <person name="Wang J."/>
            <person name="Deng Y."/>
            <person name="Ran L."/>
            <person name="Shi X."/>
            <person name="Wang X."/>
            <person name="Wu Q."/>
            <person name="Li C."/>
            <person name="Ren X."/>
            <person name="Wang J."/>
            <person name="Wang X."/>
            <person name="Li D."/>
            <person name="Liu D."/>
            <person name="Zhang X."/>
            <person name="Ji Z."/>
            <person name="Zhao W."/>
            <person name="Sun Y."/>
            <person name="Zhang Z."/>
            <person name="Bao J."/>
            <person name="Han Y."/>
            <person name="Dong L."/>
            <person name="Ji J."/>
            <person name="Chen P."/>
            <person name="Wu S."/>
            <person name="Liu J."/>
            <person name="Xiao Y."/>
            <person name="Bu D."/>
            <person name="Tan J."/>
            <person name="Yang L."/>
            <person name="Ye C."/>
            <person name="Zhang J."/>
            <person name="Xu J."/>
            <person name="Zhou Y."/>
            <person name="Yu Y."/>
            <person name="Zhang B."/>
            <person name="Zhuang S."/>
            <person name="Wei H."/>
            <person name="Liu B."/>
            <person name="Lei M."/>
            <person name="Yu H."/>
            <person name="Li Y."/>
            <person name="Xu H."/>
            <person name="Wei S."/>
            <person name="He X."/>
            <person name="Fang L."/>
            <person name="Zhang Z."/>
            <person name="Zhang Y."/>
            <person name="Huang X."/>
            <person name="Su Z."/>
            <person name="Tong W."/>
            <person name="Li J."/>
            <person name="Tong Z."/>
            <person name="Li S."/>
            <person name="Ye J."/>
            <person name="Wang L."/>
            <person name="Fang L."/>
            <person name="Lei T."/>
            <person name="Chen C.-S."/>
            <person name="Chen H.-C."/>
            <person name="Xu Z."/>
            <person name="Li H."/>
            <person name="Huang H."/>
            <person name="Zhang F."/>
            <person name="Xu H."/>
            <person name="Li N."/>
            <person name="Zhao C."/>
            <person name="Li S."/>
            <person name="Dong L."/>
            <person name="Huang Y."/>
            <person name="Li L."/>
            <person name="Xi Y."/>
            <person name="Qi Q."/>
            <person name="Li W."/>
            <person name="Zhang B."/>
            <person name="Hu W."/>
            <person name="Zhang Y."/>
            <person name="Tian X."/>
            <person name="Jiao Y."/>
            <person name="Liang X."/>
            <person name="Jin J."/>
            <person name="Gao L."/>
            <person name="Zheng W."/>
            <person name="Hao B."/>
            <person name="Liu S.-M."/>
            <person name="Wang W."/>
            <person name="Yuan L."/>
            <person name="Cao M."/>
            <person name="McDermott J."/>
            <person name="Samudrala R."/>
            <person name="Wang J."/>
            <person name="Wong G.K.-S."/>
            <person name="Yang H."/>
        </authorList>
    </citation>
    <scope>NUCLEOTIDE SEQUENCE [LARGE SCALE GENOMIC DNA]</scope>
    <source>
        <strain>cv. 93-11</strain>
    </source>
</reference>
<feature type="chain" id="PRO_0000286903" description="Cysteine protease ATG4B">
    <location>
        <begin position="1"/>
        <end position="478"/>
    </location>
</feature>
<feature type="region of interest" description="Disordered" evidence="3">
    <location>
        <begin position="1"/>
        <end position="20"/>
    </location>
</feature>
<feature type="compositionally biased region" description="Polar residues" evidence="3">
    <location>
        <begin position="1"/>
        <end position="15"/>
    </location>
</feature>
<feature type="active site" description="Nucleophile" evidence="2">
    <location>
        <position position="164"/>
    </location>
</feature>
<feature type="active site" evidence="2">
    <location>
        <position position="361"/>
    </location>
</feature>
<feature type="active site" evidence="2">
    <location>
        <position position="363"/>
    </location>
</feature>
<feature type="sequence conflict" description="In Ref. 1; ABB77259." evidence="6" ref="1">
    <original>L</original>
    <variation>S</variation>
    <location>
        <position position="78"/>
    </location>
</feature>
<feature type="sequence conflict" description="In Ref. 1; ABB77259." evidence="6" ref="1">
    <original>S</original>
    <variation>L</variation>
    <location>
        <position position="190"/>
    </location>
</feature>